<organism>
    <name type="scientific">Candida albicans (strain SC5314 / ATCC MYA-2876)</name>
    <name type="common">Yeast</name>
    <dbReference type="NCBI Taxonomy" id="237561"/>
    <lineage>
        <taxon>Eukaryota</taxon>
        <taxon>Fungi</taxon>
        <taxon>Dikarya</taxon>
        <taxon>Ascomycota</taxon>
        <taxon>Saccharomycotina</taxon>
        <taxon>Pichiomycetes</taxon>
        <taxon>Debaryomycetaceae</taxon>
        <taxon>Candida/Lodderomyces clade</taxon>
        <taxon>Candida</taxon>
    </lineage>
</organism>
<name>RS8A_CANAL</name>
<evidence type="ECO:0000256" key="1">
    <source>
        <dbReference type="SAM" id="MobiDB-lite"/>
    </source>
</evidence>
<evidence type="ECO:0000269" key="2">
    <source>
    </source>
</evidence>
<evidence type="ECO:0000303" key="3">
    <source>
    </source>
</evidence>
<evidence type="ECO:0000305" key="4"/>
<evidence type="ECO:0000305" key="5">
    <source>
    </source>
</evidence>
<evidence type="ECO:0007744" key="6">
    <source>
        <dbReference type="PDB" id="7PZY"/>
    </source>
</evidence>
<evidence type="ECO:0007744" key="7">
    <source>
        <dbReference type="PDB" id="7Q0F"/>
    </source>
</evidence>
<evidence type="ECO:0007744" key="8">
    <source>
        <dbReference type="PDB" id="7Q0P"/>
    </source>
</evidence>
<proteinExistence type="evidence at protein level"/>
<comment type="function">
    <text evidence="5">Component of the ribosome, a large ribonucleoprotein complex responsible for the synthesis of proteins in the cell. The small ribosomal subunit (SSU) binds messenger RNAs (mRNAs) and translates the encoded message by selecting cognate aminoacyl-transfer RNA (tRNA) molecules. The large subunit (LSU) contains the ribosomal catalytic site termed the peptidyl transferase center (PTC), which catalyzes the formation of peptide bonds, thereby polymerizing the amino acids delivered by tRNAs into a polypeptide chain. The nascent polypeptides leave the ribosome through a tunnel in the LSU and interact with protein factors that function in enzymatic processing, targeting, and the membrane insertion of nascent chains at the exit of the ribosomal tunnel.</text>
</comment>
<comment type="subunit">
    <text evidence="2">Component of the small ribosomal subunit (PubMed:35613268). Mature ribosomes consist of a small (40S) and a large (60S) subunit (PubMed:35613268). The 40S subunit contains about 32 different proteins and 1 molecule of RNA (18S) (PubMed:35613268). The 60S subunit contains 45 different proteins and 3 molecules of RNA (25S, 5.8S and 5S) (PubMed:35613268).</text>
</comment>
<comment type="subcellular location">
    <subcellularLocation>
        <location evidence="5">Cytoplasm</location>
    </subcellularLocation>
</comment>
<comment type="similarity">
    <text evidence="4">Belongs to the eukaryotic ribosomal protein eS8 family.</text>
</comment>
<sequence>MGISRDSRHKRSATGAKRAQFRKKRKFELGRQPANTKIGPKRIHSVRTRGGNQKFRALRVETGNFSWGSEGVSRKTRIAGVVYHPSNNELVRTNTLTKSAVVQIDATPFRQWYENHYGATLGKKKGGAHAAHAAEVADAKRSRKVERKLAARSGAAAIESAVDSQFGSGRLYAVISSRPGQSGRCDGYILEGEELAFYLRRLTAKK</sequence>
<reference key="1">
    <citation type="journal article" date="2004" name="Proc. Natl. Acad. Sci. U.S.A.">
        <title>The diploid genome sequence of Candida albicans.</title>
        <authorList>
            <person name="Jones T."/>
            <person name="Federspiel N.A."/>
            <person name="Chibana H."/>
            <person name="Dungan J."/>
            <person name="Kalman S."/>
            <person name="Magee B.B."/>
            <person name="Newport G."/>
            <person name="Thorstenson Y.R."/>
            <person name="Agabian N."/>
            <person name="Magee P.T."/>
            <person name="Davis R.W."/>
            <person name="Scherer S."/>
        </authorList>
    </citation>
    <scope>NUCLEOTIDE SEQUENCE [LARGE SCALE GENOMIC DNA]</scope>
    <source>
        <strain>SC5314 / ATCC MYA-2876</strain>
    </source>
</reference>
<reference key="2">
    <citation type="journal article" date="2007" name="Genome Biol.">
        <title>Assembly of the Candida albicans genome into sixteen supercontigs aligned on the eight chromosomes.</title>
        <authorList>
            <person name="van het Hoog M."/>
            <person name="Rast T.J."/>
            <person name="Martchenko M."/>
            <person name="Grindle S."/>
            <person name="Dignard D."/>
            <person name="Hogues H."/>
            <person name="Cuomo C."/>
            <person name="Berriman M."/>
            <person name="Scherer S."/>
            <person name="Magee B.B."/>
            <person name="Whiteway M."/>
            <person name="Chibana H."/>
            <person name="Nantel A."/>
            <person name="Magee P.T."/>
        </authorList>
    </citation>
    <scope>GENOME REANNOTATION</scope>
    <source>
        <strain>SC5314 / ATCC MYA-2876</strain>
    </source>
</reference>
<reference key="3">
    <citation type="journal article" date="2013" name="Genome Biol.">
        <title>Assembly of a phased diploid Candida albicans genome facilitates allele-specific measurements and provides a simple model for repeat and indel structure.</title>
        <authorList>
            <person name="Muzzey D."/>
            <person name="Schwartz K."/>
            <person name="Weissman J.S."/>
            <person name="Sherlock G."/>
        </authorList>
    </citation>
    <scope>NUCLEOTIDE SEQUENCE [LARGE SCALE GENOMIC DNA]</scope>
    <scope>GENOME REANNOTATION</scope>
    <source>
        <strain>SC5314 / ATCC MYA-2876</strain>
    </source>
</reference>
<reference evidence="6 7 8" key="4">
    <citation type="journal article" date="2022" name="Sci. Adv.">
        <title>E-site drug specificity of the human pathogen Candida albicans ribosome.</title>
        <authorList>
            <person name="Zgadzay Y."/>
            <person name="Kolosova O."/>
            <person name="Stetsenko A."/>
            <person name="Wu C."/>
            <person name="Bruchlen D."/>
            <person name="Usachev K."/>
            <person name="Validov S."/>
            <person name="Jenner L."/>
            <person name="Rogachev A."/>
            <person name="Yusupova G."/>
            <person name="Sachs M.S."/>
            <person name="Guskov A."/>
            <person name="Yusupov M."/>
        </authorList>
    </citation>
    <scope>STRUCTURE BY ELECTRON MICROSCOPY (2.32 ANGSTROMS) OF THE 80S RIBOSOME</scope>
    <scope>SUBUNIT</scope>
</reference>
<keyword id="KW-0002">3D-structure</keyword>
<keyword id="KW-0963">Cytoplasm</keyword>
<keyword id="KW-1185">Reference proteome</keyword>
<keyword id="KW-0687">Ribonucleoprotein</keyword>
<keyword id="KW-0689">Ribosomal protein</keyword>
<accession>Q59T44</accession>
<dbReference type="EMBL" id="CP017624">
    <property type="protein sequence ID" value="AOW27573.1"/>
    <property type="molecule type" value="Genomic_DNA"/>
</dbReference>
<dbReference type="RefSeq" id="XP_712803.1">
    <property type="nucleotide sequence ID" value="XM_707710.1"/>
</dbReference>
<dbReference type="PDB" id="7PZY">
    <property type="method" value="EM"/>
    <property type="resolution" value="2.32 A"/>
    <property type="chains" value="J=1-206"/>
</dbReference>
<dbReference type="PDB" id="7Q08">
    <property type="method" value="EM"/>
    <property type="resolution" value="2.56 A"/>
    <property type="chains" value="J=1-206"/>
</dbReference>
<dbReference type="PDB" id="7Q0F">
    <property type="method" value="EM"/>
    <property type="resolution" value="2.64 A"/>
    <property type="chains" value="J=1-206"/>
</dbReference>
<dbReference type="PDB" id="7Q0P">
    <property type="method" value="EM"/>
    <property type="resolution" value="2.77 A"/>
    <property type="chains" value="J=1-206"/>
</dbReference>
<dbReference type="PDB" id="7Q0R">
    <property type="method" value="EM"/>
    <property type="resolution" value="2.67 A"/>
    <property type="chains" value="J=1-206"/>
</dbReference>
<dbReference type="PDB" id="8C3A">
    <property type="method" value="X-ray"/>
    <property type="resolution" value="3.00 A"/>
    <property type="chains" value="CV/K=1-206"/>
</dbReference>
<dbReference type="PDB" id="8OGJ">
    <property type="method" value="EM"/>
    <property type="resolution" value="3.10 A"/>
    <property type="chains" value="J=1-206"/>
</dbReference>
<dbReference type="PDB" id="8OH6">
    <property type="method" value="X-ray"/>
    <property type="resolution" value="3.35 A"/>
    <property type="chains" value="CV/K=1-206"/>
</dbReference>
<dbReference type="PDB" id="8OI5">
    <property type="method" value="X-ray"/>
    <property type="resolution" value="2.90 A"/>
    <property type="chains" value="CV/K=1-206"/>
</dbReference>
<dbReference type="PDB" id="8OJ3">
    <property type="method" value="X-ray"/>
    <property type="resolution" value="3.50 A"/>
    <property type="chains" value="CV/K=1-206"/>
</dbReference>
<dbReference type="PDBsum" id="7PZY"/>
<dbReference type="PDBsum" id="7Q08"/>
<dbReference type="PDBsum" id="7Q0F"/>
<dbReference type="PDBsum" id="7Q0P"/>
<dbReference type="PDBsum" id="7Q0R"/>
<dbReference type="PDBsum" id="8C3A"/>
<dbReference type="PDBsum" id="8OGJ"/>
<dbReference type="PDBsum" id="8OH6"/>
<dbReference type="PDBsum" id="8OI5"/>
<dbReference type="PDBsum" id="8OJ3"/>
<dbReference type="EMDB" id="EMD-13737"/>
<dbReference type="EMDB" id="EMD-13741"/>
<dbReference type="EMDB" id="EMD-13744"/>
<dbReference type="EMDB" id="EMD-13749"/>
<dbReference type="EMDB" id="EMD-13750"/>
<dbReference type="SMR" id="Q59T44"/>
<dbReference type="FunCoup" id="Q59T44">
    <property type="interactions" value="1201"/>
</dbReference>
<dbReference type="STRING" id="237561.Q59T44"/>
<dbReference type="EnsemblFungi" id="C2_05610C_A-T">
    <property type="protein sequence ID" value="C2_05610C_A-T-p1"/>
    <property type="gene ID" value="C2_05610C_A"/>
</dbReference>
<dbReference type="GeneID" id="3645565"/>
<dbReference type="KEGG" id="cal:CAALFM_C205610CA"/>
<dbReference type="CGD" id="CAL0000186765">
    <property type="gene designation" value="RPS8A"/>
</dbReference>
<dbReference type="VEuPathDB" id="FungiDB:C2_05610C_A"/>
<dbReference type="eggNOG" id="KOG3283">
    <property type="taxonomic scope" value="Eukaryota"/>
</dbReference>
<dbReference type="HOGENOM" id="CLU_080597_1_1_1"/>
<dbReference type="InParanoid" id="Q59T44"/>
<dbReference type="OMA" id="QRPHYRK"/>
<dbReference type="OrthoDB" id="1703270at2759"/>
<dbReference type="Proteomes" id="UP000000559">
    <property type="component" value="Chromosome 2"/>
</dbReference>
<dbReference type="GO" id="GO:0009986">
    <property type="term" value="C:cell surface"/>
    <property type="evidence" value="ECO:0000314"/>
    <property type="project" value="CGD"/>
</dbReference>
<dbReference type="GO" id="GO:0022627">
    <property type="term" value="C:cytosolic small ribosomal subunit"/>
    <property type="evidence" value="ECO:0000318"/>
    <property type="project" value="GO_Central"/>
</dbReference>
<dbReference type="GO" id="GO:0003735">
    <property type="term" value="F:structural constituent of ribosome"/>
    <property type="evidence" value="ECO:0000318"/>
    <property type="project" value="GO_Central"/>
</dbReference>
<dbReference type="GO" id="GO:0000462">
    <property type="term" value="P:maturation of SSU-rRNA from tricistronic rRNA transcript (SSU-rRNA, 5.8S rRNA, LSU-rRNA)"/>
    <property type="evidence" value="ECO:0000318"/>
    <property type="project" value="GO_Central"/>
</dbReference>
<dbReference type="GO" id="GO:0006412">
    <property type="term" value="P:translation"/>
    <property type="evidence" value="ECO:0007669"/>
    <property type="project" value="InterPro"/>
</dbReference>
<dbReference type="CDD" id="cd11380">
    <property type="entry name" value="Ribosomal_S8e_like"/>
    <property type="match status" value="1"/>
</dbReference>
<dbReference type="FunFam" id="1.10.168.20:FF:000001">
    <property type="entry name" value="40S ribosomal protein S8"/>
    <property type="match status" value="1"/>
</dbReference>
<dbReference type="FunFam" id="3.10.290.70:FF:000001">
    <property type="entry name" value="40S ribosomal protein S8"/>
    <property type="match status" value="1"/>
</dbReference>
<dbReference type="Gene3D" id="3.10.290.70">
    <property type="match status" value="1"/>
</dbReference>
<dbReference type="Gene3D" id="1.10.168.20">
    <property type="entry name" value="Ribosomal protein S8e, subdomain"/>
    <property type="match status" value="1"/>
</dbReference>
<dbReference type="InterPro" id="IPR001047">
    <property type="entry name" value="Ribosomal_eS8"/>
</dbReference>
<dbReference type="InterPro" id="IPR018283">
    <property type="entry name" value="Ribosomal_eS8_CS"/>
</dbReference>
<dbReference type="InterPro" id="IPR042563">
    <property type="entry name" value="Ribosomal_protein_eS8_euk"/>
</dbReference>
<dbReference type="InterPro" id="IPR022309">
    <property type="entry name" value="Ribosomal_Se8/biogenesis_NSA2"/>
</dbReference>
<dbReference type="NCBIfam" id="TIGR00307">
    <property type="entry name" value="eS8"/>
    <property type="match status" value="1"/>
</dbReference>
<dbReference type="PANTHER" id="PTHR10394">
    <property type="entry name" value="40S RIBOSOMAL PROTEIN S8"/>
    <property type="match status" value="1"/>
</dbReference>
<dbReference type="Pfam" id="PF01201">
    <property type="entry name" value="Ribosomal_S8e"/>
    <property type="match status" value="1"/>
</dbReference>
<dbReference type="PROSITE" id="PS01193">
    <property type="entry name" value="RIBOSOMAL_S8E"/>
    <property type="match status" value="1"/>
</dbReference>
<feature type="chain" id="PRO_0000456546" description="Small ribosomal subunit protein eS8">
    <location>
        <begin position="1"/>
        <end position="206"/>
    </location>
</feature>
<feature type="region of interest" description="Disordered" evidence="1">
    <location>
        <begin position="1"/>
        <end position="37"/>
    </location>
</feature>
<gene>
    <name type="primary">RPS8A</name>
    <name type="ordered locus">orf19.6873</name>
    <name type="ORF">CAALFM_C205610CA</name>
</gene>
<protein>
    <recommendedName>
        <fullName evidence="3">Small ribosomal subunit protein eS8</fullName>
    </recommendedName>
    <alternativeName>
        <fullName>40S ribosomal protein S8</fullName>
    </alternativeName>
</protein>